<feature type="chain" id="PRO_0000363899" description="Small heat shock protein hspG7">
    <location>
        <begin position="1"/>
        <end position="207"/>
    </location>
</feature>
<feature type="domain" description="sHSP" evidence="1">
    <location>
        <begin position="30"/>
        <end position="207"/>
    </location>
</feature>
<feature type="region of interest" description="Disordered" evidence="2">
    <location>
        <begin position="84"/>
        <end position="149"/>
    </location>
</feature>
<feature type="compositionally biased region" description="Low complexity" evidence="2">
    <location>
        <begin position="84"/>
        <end position="101"/>
    </location>
</feature>
<feature type="compositionally biased region" description="Low complexity" evidence="2">
    <location>
        <begin position="122"/>
        <end position="135"/>
    </location>
</feature>
<feature type="compositionally biased region" description="Basic and acidic residues" evidence="2">
    <location>
        <begin position="136"/>
        <end position="149"/>
    </location>
</feature>
<name>HSPG7_DICDI</name>
<organism>
    <name type="scientific">Dictyostelium discoideum</name>
    <name type="common">Social amoeba</name>
    <dbReference type="NCBI Taxonomy" id="44689"/>
    <lineage>
        <taxon>Eukaryota</taxon>
        <taxon>Amoebozoa</taxon>
        <taxon>Evosea</taxon>
        <taxon>Eumycetozoa</taxon>
        <taxon>Dictyostelia</taxon>
        <taxon>Dictyosteliales</taxon>
        <taxon>Dictyosteliaceae</taxon>
        <taxon>Dictyostelium</taxon>
    </lineage>
</organism>
<sequence length="207" mass="23422">MATIFDILNTLNNNNFENCKRQCSTNKSNKTIIDILPPMDVTMTNDKLIIETELAGISKDQIEIDIKDSILTIQGEKKKNLNKQQQQLVIEKSSTSPSSSTLDSKENGPSIEEFEDDIKPKSTTSTTTVSTATTTKENKEDENKTKSSDKKFISERSFGNFKRYLDLTKVLYQLDLNSINTQFENGLLTITINKKLHYSNTIKININ</sequence>
<reference key="1">
    <citation type="journal article" date="2002" name="Nature">
        <title>Sequence and analysis of chromosome 2 of Dictyostelium discoideum.</title>
        <authorList>
            <person name="Gloeckner G."/>
            <person name="Eichinger L."/>
            <person name="Szafranski K."/>
            <person name="Pachebat J.A."/>
            <person name="Bankier A.T."/>
            <person name="Dear P.H."/>
            <person name="Lehmann R."/>
            <person name="Baumgart C."/>
            <person name="Parra G."/>
            <person name="Abril J.F."/>
            <person name="Guigo R."/>
            <person name="Kumpf K."/>
            <person name="Tunggal B."/>
            <person name="Cox E.C."/>
            <person name="Quail M.A."/>
            <person name="Platzer M."/>
            <person name="Rosenthal A."/>
            <person name="Noegel A.A."/>
        </authorList>
    </citation>
    <scope>NUCLEOTIDE SEQUENCE [LARGE SCALE GENOMIC DNA]</scope>
    <source>
        <strain>AX4</strain>
    </source>
</reference>
<reference key="2">
    <citation type="journal article" date="2005" name="Nature">
        <title>The genome of the social amoeba Dictyostelium discoideum.</title>
        <authorList>
            <person name="Eichinger L."/>
            <person name="Pachebat J.A."/>
            <person name="Gloeckner G."/>
            <person name="Rajandream M.A."/>
            <person name="Sucgang R."/>
            <person name="Berriman M."/>
            <person name="Song J."/>
            <person name="Olsen R."/>
            <person name="Szafranski K."/>
            <person name="Xu Q."/>
            <person name="Tunggal B."/>
            <person name="Kummerfeld S."/>
            <person name="Madera M."/>
            <person name="Konfortov B.A."/>
            <person name="Rivero F."/>
            <person name="Bankier A.T."/>
            <person name="Lehmann R."/>
            <person name="Hamlin N."/>
            <person name="Davies R."/>
            <person name="Gaudet P."/>
            <person name="Fey P."/>
            <person name="Pilcher K."/>
            <person name="Chen G."/>
            <person name="Saunders D."/>
            <person name="Sodergren E.J."/>
            <person name="Davis P."/>
            <person name="Kerhornou A."/>
            <person name="Nie X."/>
            <person name="Hall N."/>
            <person name="Anjard C."/>
            <person name="Hemphill L."/>
            <person name="Bason N."/>
            <person name="Farbrother P."/>
            <person name="Desany B."/>
            <person name="Just E."/>
            <person name="Morio T."/>
            <person name="Rost R."/>
            <person name="Churcher C.M."/>
            <person name="Cooper J."/>
            <person name="Haydock S."/>
            <person name="van Driessche N."/>
            <person name="Cronin A."/>
            <person name="Goodhead I."/>
            <person name="Muzny D.M."/>
            <person name="Mourier T."/>
            <person name="Pain A."/>
            <person name="Lu M."/>
            <person name="Harper D."/>
            <person name="Lindsay R."/>
            <person name="Hauser H."/>
            <person name="James K.D."/>
            <person name="Quiles M."/>
            <person name="Madan Babu M."/>
            <person name="Saito T."/>
            <person name="Buchrieser C."/>
            <person name="Wardroper A."/>
            <person name="Felder M."/>
            <person name="Thangavelu M."/>
            <person name="Johnson D."/>
            <person name="Knights A."/>
            <person name="Loulseged H."/>
            <person name="Mungall K.L."/>
            <person name="Oliver K."/>
            <person name="Price C."/>
            <person name="Quail M.A."/>
            <person name="Urushihara H."/>
            <person name="Hernandez J."/>
            <person name="Rabbinowitsch E."/>
            <person name="Steffen D."/>
            <person name="Sanders M."/>
            <person name="Ma J."/>
            <person name="Kohara Y."/>
            <person name="Sharp S."/>
            <person name="Simmonds M.N."/>
            <person name="Spiegler S."/>
            <person name="Tivey A."/>
            <person name="Sugano S."/>
            <person name="White B."/>
            <person name="Walker D."/>
            <person name="Woodward J.R."/>
            <person name="Winckler T."/>
            <person name="Tanaka Y."/>
            <person name="Shaulsky G."/>
            <person name="Schleicher M."/>
            <person name="Weinstock G.M."/>
            <person name="Rosenthal A."/>
            <person name="Cox E.C."/>
            <person name="Chisholm R.L."/>
            <person name="Gibbs R.A."/>
            <person name="Loomis W.F."/>
            <person name="Platzer M."/>
            <person name="Kay R.R."/>
            <person name="Williams J.G."/>
            <person name="Dear P.H."/>
            <person name="Noegel A.A."/>
            <person name="Barrell B.G."/>
            <person name="Kuspa A."/>
        </authorList>
    </citation>
    <scope>NUCLEOTIDE SEQUENCE [LARGE SCALE GENOMIC DNA]</scope>
    <source>
        <strain>AX4</strain>
    </source>
</reference>
<gene>
    <name type="primary">hspG7</name>
    <name type="ORF">DDB_G0276951</name>
</gene>
<protein>
    <recommendedName>
        <fullName>Small heat shock protein hspG7</fullName>
    </recommendedName>
</protein>
<keyword id="KW-1185">Reference proteome</keyword>
<keyword id="KW-0346">Stress response</keyword>
<proteinExistence type="inferred from homology"/>
<accession>Q8MPA5</accession>
<accession>Q550F1</accession>
<dbReference type="EMBL" id="AAFI02000019">
    <property type="protein sequence ID" value="EAL68977.1"/>
    <property type="molecule type" value="Genomic_DNA"/>
</dbReference>
<dbReference type="RefSeq" id="XP_642981.1">
    <property type="nucleotide sequence ID" value="XM_637889.1"/>
</dbReference>
<dbReference type="SMR" id="Q8MPA5"/>
<dbReference type="STRING" id="44689.Q8MPA5"/>
<dbReference type="PaxDb" id="44689-DDB0232124"/>
<dbReference type="EnsemblProtists" id="EAL68977">
    <property type="protein sequence ID" value="EAL68977"/>
    <property type="gene ID" value="DDB_G0276951"/>
</dbReference>
<dbReference type="GeneID" id="8620853"/>
<dbReference type="KEGG" id="ddi:DDB_G0276951"/>
<dbReference type="dictyBase" id="DDB_G0276951">
    <property type="gene designation" value="hspG7"/>
</dbReference>
<dbReference type="VEuPathDB" id="AmoebaDB:DDB_G0276951"/>
<dbReference type="eggNOG" id="KOG0710">
    <property type="taxonomic scope" value="Eukaryota"/>
</dbReference>
<dbReference type="HOGENOM" id="CLU_1328489_0_0_1"/>
<dbReference type="InParanoid" id="Q8MPA5"/>
<dbReference type="OMA" id="PQWQPKF"/>
<dbReference type="PhylomeDB" id="Q8MPA5"/>
<dbReference type="PRO" id="PR:Q8MPA5"/>
<dbReference type="Proteomes" id="UP000002195">
    <property type="component" value="Chromosome 2"/>
</dbReference>
<dbReference type="CDD" id="cd06464">
    <property type="entry name" value="ACD_sHsps-like"/>
    <property type="match status" value="1"/>
</dbReference>
<dbReference type="Gene3D" id="2.60.40.790">
    <property type="match status" value="2"/>
</dbReference>
<dbReference type="InterPro" id="IPR002068">
    <property type="entry name" value="A-crystallin/Hsp20_dom"/>
</dbReference>
<dbReference type="InterPro" id="IPR008978">
    <property type="entry name" value="HSP20-like_chaperone"/>
</dbReference>
<dbReference type="InterPro" id="IPR051779">
    <property type="entry name" value="HspG1-11-like"/>
</dbReference>
<dbReference type="PANTHER" id="PTHR46827">
    <property type="entry name" value="HEAT SHOCK PROTEIN DDB_G0288861-RELATED"/>
    <property type="match status" value="1"/>
</dbReference>
<dbReference type="PANTHER" id="PTHR46827:SF1">
    <property type="entry name" value="HEAT SHOCK PROTEIN DDB_G0288861-RELATED"/>
    <property type="match status" value="1"/>
</dbReference>
<dbReference type="Pfam" id="PF00011">
    <property type="entry name" value="HSP20"/>
    <property type="match status" value="2"/>
</dbReference>
<dbReference type="SUPFAM" id="SSF49764">
    <property type="entry name" value="HSP20-like chaperones"/>
    <property type="match status" value="1"/>
</dbReference>
<dbReference type="PROSITE" id="PS01031">
    <property type="entry name" value="SHSP"/>
    <property type="match status" value="1"/>
</dbReference>
<evidence type="ECO:0000255" key="1">
    <source>
        <dbReference type="PROSITE-ProRule" id="PRU00285"/>
    </source>
</evidence>
<evidence type="ECO:0000256" key="2">
    <source>
        <dbReference type="SAM" id="MobiDB-lite"/>
    </source>
</evidence>
<comment type="similarity">
    <text evidence="1">Belongs to the small heat shock protein (HSP20) family.</text>
</comment>